<organism>
    <name type="scientific">Syntrophomonas wolfei subsp. wolfei (strain DSM 2245B / Goettingen)</name>
    <dbReference type="NCBI Taxonomy" id="335541"/>
    <lineage>
        <taxon>Bacteria</taxon>
        <taxon>Bacillati</taxon>
        <taxon>Bacillota</taxon>
        <taxon>Clostridia</taxon>
        <taxon>Eubacteriales</taxon>
        <taxon>Syntrophomonadaceae</taxon>
        <taxon>Syntrophomonas</taxon>
    </lineage>
</organism>
<evidence type="ECO:0000255" key="1">
    <source>
        <dbReference type="HAMAP-Rule" id="MF_00011"/>
    </source>
</evidence>
<sequence>MSAVVLVGAQWGDEGKGKITDFLAEKANCVVRYQGGSNAGHTVEVSQEKFMLHLIPSGILYPETLCVIGNGVVVDMGKLIEEIDGLQKRGIDTSNLRISLRSPVVMPYHKRIDELEDRHTRIGTTKRGIGPAYADKINRIGFRMGDILTGGECFRERFKAQIEYKNRIMEEIYQEDGFDYQQMLNEVLGQAEQLKKYLADTSYLVYTAIKEGKKVLFEGAQGTLLDIDHGTYPYVTSSHPIAGGACVGTGIGPTNISKVLGVAKAYTTRVGEGPFPTELNDFQGEILRDKGQEYGTTTGRPRRCGWLDTVILRYAVRINGLTDFAITKLDVLDSFSTIKICVAYRYKGQLLTEFPNNIAILDDCEPEYIELPGWQEDISAASSIEDLPLNARAYVAKIEELTGVKAAIIAVGPKRKQTIVNSPLFT</sequence>
<reference key="1">
    <citation type="journal article" date="2010" name="Environ. Microbiol.">
        <title>The genome of Syntrophomonas wolfei: new insights into syntrophic metabolism and biohydrogen production.</title>
        <authorList>
            <person name="Sieber J.R."/>
            <person name="Sims D.R."/>
            <person name="Han C."/>
            <person name="Kim E."/>
            <person name="Lykidis A."/>
            <person name="Lapidus A.L."/>
            <person name="McDonnald E."/>
            <person name="Rohlin L."/>
            <person name="Culley D.E."/>
            <person name="Gunsalus R."/>
            <person name="McInerney M.J."/>
        </authorList>
    </citation>
    <scope>NUCLEOTIDE SEQUENCE [LARGE SCALE GENOMIC DNA]</scope>
    <source>
        <strain>DSM 2245B / Goettingen</strain>
    </source>
</reference>
<gene>
    <name evidence="1" type="primary">purA</name>
    <name type="ordered locus">Swol_2533</name>
</gene>
<proteinExistence type="inferred from homology"/>
<protein>
    <recommendedName>
        <fullName evidence="1">Adenylosuccinate synthetase</fullName>
        <shortName evidence="1">AMPSase</shortName>
        <shortName evidence="1">AdSS</shortName>
        <ecNumber evidence="1">6.3.4.4</ecNumber>
    </recommendedName>
    <alternativeName>
        <fullName evidence="1">IMP--aspartate ligase</fullName>
    </alternativeName>
</protein>
<comment type="function">
    <text evidence="1">Plays an important role in the de novo pathway of purine nucleotide biosynthesis. Catalyzes the first committed step in the biosynthesis of AMP from IMP.</text>
</comment>
<comment type="catalytic activity">
    <reaction evidence="1">
        <text>IMP + L-aspartate + GTP = N(6)-(1,2-dicarboxyethyl)-AMP + GDP + phosphate + 2 H(+)</text>
        <dbReference type="Rhea" id="RHEA:15753"/>
        <dbReference type="ChEBI" id="CHEBI:15378"/>
        <dbReference type="ChEBI" id="CHEBI:29991"/>
        <dbReference type="ChEBI" id="CHEBI:37565"/>
        <dbReference type="ChEBI" id="CHEBI:43474"/>
        <dbReference type="ChEBI" id="CHEBI:57567"/>
        <dbReference type="ChEBI" id="CHEBI:58053"/>
        <dbReference type="ChEBI" id="CHEBI:58189"/>
        <dbReference type="EC" id="6.3.4.4"/>
    </reaction>
</comment>
<comment type="cofactor">
    <cofactor evidence="1">
        <name>Mg(2+)</name>
        <dbReference type="ChEBI" id="CHEBI:18420"/>
    </cofactor>
    <text evidence="1">Binds 1 Mg(2+) ion per subunit.</text>
</comment>
<comment type="pathway">
    <text evidence="1">Purine metabolism; AMP biosynthesis via de novo pathway; AMP from IMP: step 1/2.</text>
</comment>
<comment type="subunit">
    <text evidence="1">Homodimer.</text>
</comment>
<comment type="subcellular location">
    <subcellularLocation>
        <location evidence="1">Cytoplasm</location>
    </subcellularLocation>
</comment>
<comment type="similarity">
    <text evidence="1">Belongs to the adenylosuccinate synthetase family.</text>
</comment>
<feature type="chain" id="PRO_1000000941" description="Adenylosuccinate synthetase">
    <location>
        <begin position="1"/>
        <end position="426"/>
    </location>
</feature>
<feature type="active site" description="Proton acceptor" evidence="1">
    <location>
        <position position="13"/>
    </location>
</feature>
<feature type="active site" description="Proton donor" evidence="1">
    <location>
        <position position="41"/>
    </location>
</feature>
<feature type="binding site" evidence="1">
    <location>
        <begin position="12"/>
        <end position="18"/>
    </location>
    <ligand>
        <name>GTP</name>
        <dbReference type="ChEBI" id="CHEBI:37565"/>
    </ligand>
</feature>
<feature type="binding site" description="in other chain" evidence="1">
    <location>
        <begin position="13"/>
        <end position="16"/>
    </location>
    <ligand>
        <name>IMP</name>
        <dbReference type="ChEBI" id="CHEBI:58053"/>
        <note>ligand shared between dimeric partners</note>
    </ligand>
</feature>
<feature type="binding site" evidence="1">
    <location>
        <position position="13"/>
    </location>
    <ligand>
        <name>Mg(2+)</name>
        <dbReference type="ChEBI" id="CHEBI:18420"/>
    </ligand>
</feature>
<feature type="binding site" description="in other chain" evidence="1">
    <location>
        <begin position="38"/>
        <end position="41"/>
    </location>
    <ligand>
        <name>IMP</name>
        <dbReference type="ChEBI" id="CHEBI:58053"/>
        <note>ligand shared between dimeric partners</note>
    </ligand>
</feature>
<feature type="binding site" evidence="1">
    <location>
        <begin position="40"/>
        <end position="42"/>
    </location>
    <ligand>
        <name>GTP</name>
        <dbReference type="ChEBI" id="CHEBI:37565"/>
    </ligand>
</feature>
<feature type="binding site" evidence="1">
    <location>
        <position position="40"/>
    </location>
    <ligand>
        <name>Mg(2+)</name>
        <dbReference type="ChEBI" id="CHEBI:18420"/>
    </ligand>
</feature>
<feature type="binding site" description="in other chain" evidence="1">
    <location>
        <position position="125"/>
    </location>
    <ligand>
        <name>IMP</name>
        <dbReference type="ChEBI" id="CHEBI:58053"/>
        <note>ligand shared between dimeric partners</note>
    </ligand>
</feature>
<feature type="binding site" evidence="1">
    <location>
        <position position="139"/>
    </location>
    <ligand>
        <name>IMP</name>
        <dbReference type="ChEBI" id="CHEBI:58053"/>
        <note>ligand shared between dimeric partners</note>
    </ligand>
</feature>
<feature type="binding site" description="in other chain" evidence="1">
    <location>
        <position position="221"/>
    </location>
    <ligand>
        <name>IMP</name>
        <dbReference type="ChEBI" id="CHEBI:58053"/>
        <note>ligand shared between dimeric partners</note>
    </ligand>
</feature>
<feature type="binding site" description="in other chain" evidence="1">
    <location>
        <position position="236"/>
    </location>
    <ligand>
        <name>IMP</name>
        <dbReference type="ChEBI" id="CHEBI:58053"/>
        <note>ligand shared between dimeric partners</note>
    </ligand>
</feature>
<feature type="binding site" evidence="1">
    <location>
        <begin position="296"/>
        <end position="302"/>
    </location>
    <ligand>
        <name>substrate</name>
    </ligand>
</feature>
<feature type="binding site" description="in other chain" evidence="1">
    <location>
        <position position="300"/>
    </location>
    <ligand>
        <name>IMP</name>
        <dbReference type="ChEBI" id="CHEBI:58053"/>
        <note>ligand shared between dimeric partners</note>
    </ligand>
</feature>
<feature type="binding site" evidence="1">
    <location>
        <position position="302"/>
    </location>
    <ligand>
        <name>GTP</name>
        <dbReference type="ChEBI" id="CHEBI:37565"/>
    </ligand>
</feature>
<feature type="binding site" evidence="1">
    <location>
        <begin position="328"/>
        <end position="330"/>
    </location>
    <ligand>
        <name>GTP</name>
        <dbReference type="ChEBI" id="CHEBI:37565"/>
    </ligand>
</feature>
<feature type="binding site" evidence="1">
    <location>
        <begin position="410"/>
        <end position="412"/>
    </location>
    <ligand>
        <name>GTP</name>
        <dbReference type="ChEBI" id="CHEBI:37565"/>
    </ligand>
</feature>
<keyword id="KW-0963">Cytoplasm</keyword>
<keyword id="KW-0342">GTP-binding</keyword>
<keyword id="KW-0436">Ligase</keyword>
<keyword id="KW-0460">Magnesium</keyword>
<keyword id="KW-0479">Metal-binding</keyword>
<keyword id="KW-0547">Nucleotide-binding</keyword>
<keyword id="KW-0658">Purine biosynthesis</keyword>
<keyword id="KW-1185">Reference proteome</keyword>
<accession>Q0ATY3</accession>
<dbReference type="EC" id="6.3.4.4" evidence="1"/>
<dbReference type="EMBL" id="CP000448">
    <property type="protein sequence ID" value="ABI69821.1"/>
    <property type="molecule type" value="Genomic_DNA"/>
</dbReference>
<dbReference type="RefSeq" id="WP_011641901.1">
    <property type="nucleotide sequence ID" value="NC_008346.1"/>
</dbReference>
<dbReference type="SMR" id="Q0ATY3"/>
<dbReference type="STRING" id="335541.Swol_2533"/>
<dbReference type="KEGG" id="swo:Swol_2533"/>
<dbReference type="eggNOG" id="COG0104">
    <property type="taxonomic scope" value="Bacteria"/>
</dbReference>
<dbReference type="HOGENOM" id="CLU_029848_0_0_9"/>
<dbReference type="OrthoDB" id="9807553at2"/>
<dbReference type="UniPathway" id="UPA00075">
    <property type="reaction ID" value="UER00335"/>
</dbReference>
<dbReference type="Proteomes" id="UP000001968">
    <property type="component" value="Chromosome"/>
</dbReference>
<dbReference type="GO" id="GO:0005737">
    <property type="term" value="C:cytoplasm"/>
    <property type="evidence" value="ECO:0007669"/>
    <property type="project" value="UniProtKB-SubCell"/>
</dbReference>
<dbReference type="GO" id="GO:0004019">
    <property type="term" value="F:adenylosuccinate synthase activity"/>
    <property type="evidence" value="ECO:0007669"/>
    <property type="project" value="UniProtKB-UniRule"/>
</dbReference>
<dbReference type="GO" id="GO:0005525">
    <property type="term" value="F:GTP binding"/>
    <property type="evidence" value="ECO:0007669"/>
    <property type="project" value="UniProtKB-UniRule"/>
</dbReference>
<dbReference type="GO" id="GO:0000287">
    <property type="term" value="F:magnesium ion binding"/>
    <property type="evidence" value="ECO:0007669"/>
    <property type="project" value="UniProtKB-UniRule"/>
</dbReference>
<dbReference type="GO" id="GO:0044208">
    <property type="term" value="P:'de novo' AMP biosynthetic process"/>
    <property type="evidence" value="ECO:0007669"/>
    <property type="project" value="UniProtKB-UniRule"/>
</dbReference>
<dbReference type="GO" id="GO:0046040">
    <property type="term" value="P:IMP metabolic process"/>
    <property type="evidence" value="ECO:0007669"/>
    <property type="project" value="TreeGrafter"/>
</dbReference>
<dbReference type="CDD" id="cd03108">
    <property type="entry name" value="AdSS"/>
    <property type="match status" value="1"/>
</dbReference>
<dbReference type="FunFam" id="1.10.300.10:FF:000001">
    <property type="entry name" value="Adenylosuccinate synthetase"/>
    <property type="match status" value="1"/>
</dbReference>
<dbReference type="FunFam" id="3.90.170.10:FF:000001">
    <property type="entry name" value="Adenylosuccinate synthetase"/>
    <property type="match status" value="1"/>
</dbReference>
<dbReference type="Gene3D" id="3.40.440.10">
    <property type="entry name" value="Adenylosuccinate Synthetase, subunit A, domain 1"/>
    <property type="match status" value="1"/>
</dbReference>
<dbReference type="Gene3D" id="1.10.300.10">
    <property type="entry name" value="Adenylosuccinate Synthetase, subunit A, domain 2"/>
    <property type="match status" value="1"/>
</dbReference>
<dbReference type="Gene3D" id="3.90.170.10">
    <property type="entry name" value="Adenylosuccinate Synthetase, subunit A, domain 3"/>
    <property type="match status" value="1"/>
</dbReference>
<dbReference type="HAMAP" id="MF_00011">
    <property type="entry name" value="Adenylosucc_synth"/>
    <property type="match status" value="1"/>
</dbReference>
<dbReference type="InterPro" id="IPR018220">
    <property type="entry name" value="Adenylosuccin_syn_GTP-bd"/>
</dbReference>
<dbReference type="InterPro" id="IPR033128">
    <property type="entry name" value="Adenylosuccin_syn_Lys_AS"/>
</dbReference>
<dbReference type="InterPro" id="IPR042109">
    <property type="entry name" value="Adenylosuccinate_synth_dom1"/>
</dbReference>
<dbReference type="InterPro" id="IPR042110">
    <property type="entry name" value="Adenylosuccinate_synth_dom2"/>
</dbReference>
<dbReference type="InterPro" id="IPR042111">
    <property type="entry name" value="Adenylosuccinate_synth_dom3"/>
</dbReference>
<dbReference type="InterPro" id="IPR001114">
    <property type="entry name" value="Adenylosuccinate_synthetase"/>
</dbReference>
<dbReference type="InterPro" id="IPR027417">
    <property type="entry name" value="P-loop_NTPase"/>
</dbReference>
<dbReference type="NCBIfam" id="NF002223">
    <property type="entry name" value="PRK01117.1"/>
    <property type="match status" value="1"/>
</dbReference>
<dbReference type="NCBIfam" id="TIGR00184">
    <property type="entry name" value="purA"/>
    <property type="match status" value="1"/>
</dbReference>
<dbReference type="PANTHER" id="PTHR11846">
    <property type="entry name" value="ADENYLOSUCCINATE SYNTHETASE"/>
    <property type="match status" value="1"/>
</dbReference>
<dbReference type="PANTHER" id="PTHR11846:SF0">
    <property type="entry name" value="ADENYLOSUCCINATE SYNTHETASE"/>
    <property type="match status" value="1"/>
</dbReference>
<dbReference type="Pfam" id="PF00709">
    <property type="entry name" value="Adenylsucc_synt"/>
    <property type="match status" value="1"/>
</dbReference>
<dbReference type="SMART" id="SM00788">
    <property type="entry name" value="Adenylsucc_synt"/>
    <property type="match status" value="1"/>
</dbReference>
<dbReference type="SUPFAM" id="SSF52540">
    <property type="entry name" value="P-loop containing nucleoside triphosphate hydrolases"/>
    <property type="match status" value="1"/>
</dbReference>
<dbReference type="PROSITE" id="PS01266">
    <property type="entry name" value="ADENYLOSUCCIN_SYN_1"/>
    <property type="match status" value="1"/>
</dbReference>
<dbReference type="PROSITE" id="PS00513">
    <property type="entry name" value="ADENYLOSUCCIN_SYN_2"/>
    <property type="match status" value="1"/>
</dbReference>
<name>PURA_SYNWW</name>